<evidence type="ECO:0000250" key="1"/>
<evidence type="ECO:0000255" key="2">
    <source>
        <dbReference type="PROSITE-ProRule" id="PRU10009"/>
    </source>
</evidence>
<evidence type="ECO:0000305" key="3"/>
<gene>
    <name type="primary">Gapdh2</name>
    <name type="ORF">GA21397</name>
</gene>
<proteinExistence type="evidence at transcript level"/>
<sequence>MSKIGINGFGRIGRLVLRAAIDKGASVVAVNDPFIDVNYMVYLFKFDSTHGRFKGTVAAEGGFLVVNGQKITVFSERDPANINWASAGAEYVVESTGVFTTIEKASTHLKGGAKKVVISAPSADAPMFVCGVNLDAYKPDMKVVSNASCTTNCLAPLAKVINDNFEIVEGLMTTVHATTATQKTVDGPSGKLWRDGRGAAQNIIPAATGAAKAVGKVIPALNGKLTGMAFRVPTPNVSVVDLTVRLGKGASYDEIKAKVQEAANGPLKGILGYTDEEVVSTDFLSDTHSSVFDAKAGISLNDKFVKLISWYDNEFGYSNRVIDLIKYMQSKD</sequence>
<reference key="1">
    <citation type="journal article" date="2005" name="Genome Res.">
        <title>Comparative genome sequencing of Drosophila pseudoobscura: chromosomal, gene, and cis-element evolution.</title>
        <authorList>
            <person name="Richards S."/>
            <person name="Liu Y."/>
            <person name="Bettencourt B.R."/>
            <person name="Hradecky P."/>
            <person name="Letovsky S."/>
            <person name="Nielsen R."/>
            <person name="Thornton K."/>
            <person name="Hubisz M.J."/>
            <person name="Chen R."/>
            <person name="Meisel R.P."/>
            <person name="Couronne O."/>
            <person name="Hua S."/>
            <person name="Smith M.A."/>
            <person name="Zhang P."/>
            <person name="Liu J."/>
            <person name="Bussemaker H.J."/>
            <person name="van Batenburg M.F."/>
            <person name="Howells S.L."/>
            <person name="Scherer S.E."/>
            <person name="Sodergren E."/>
            <person name="Matthews B.B."/>
            <person name="Crosby M.A."/>
            <person name="Schroeder A.J."/>
            <person name="Ortiz-Barrientos D."/>
            <person name="Rives C.M."/>
            <person name="Metzker M.L."/>
            <person name="Muzny D.M."/>
            <person name="Scott G."/>
            <person name="Steffen D."/>
            <person name="Wheeler D.A."/>
            <person name="Worley K.C."/>
            <person name="Havlak P."/>
            <person name="Durbin K.J."/>
            <person name="Egan A."/>
            <person name="Gill R."/>
            <person name="Hume J."/>
            <person name="Morgan M.B."/>
            <person name="Miner G."/>
            <person name="Hamilton C."/>
            <person name="Huang Y."/>
            <person name="Waldron L."/>
            <person name="Verduzco D."/>
            <person name="Clerc-Blankenburg K.P."/>
            <person name="Dubchak I."/>
            <person name="Noor M.A.F."/>
            <person name="Anderson W."/>
            <person name="White K.P."/>
            <person name="Clark A.G."/>
            <person name="Schaeffer S.W."/>
            <person name="Gelbart W.M."/>
            <person name="Weinstock G.M."/>
            <person name="Gibbs R.A."/>
        </authorList>
    </citation>
    <scope>NUCLEOTIDE SEQUENCE [LARGE SCALE GENOMIC DNA]</scope>
    <source>
        <strain>MV2-25 / Tucson 14011-0121.94</strain>
    </source>
</reference>
<reference key="2">
    <citation type="journal article" date="1998" name="Genetica">
        <title>The molecular clock revisited: the rate of synonymous vs. replacement change in Drosophila.</title>
        <authorList>
            <person name="Zeng L.-W."/>
            <person name="Comeron J.M."/>
            <person name="Chen B."/>
            <person name="Kreitman M."/>
        </authorList>
    </citation>
    <scope>NUCLEOTIDE SEQUENCE [MRNA] OF 11-314</scope>
</reference>
<keyword id="KW-0963">Cytoplasm</keyword>
<keyword id="KW-0324">Glycolysis</keyword>
<keyword id="KW-0520">NAD</keyword>
<keyword id="KW-0560">Oxidoreductase</keyword>
<keyword id="KW-1185">Reference proteome</keyword>
<comment type="catalytic activity">
    <reaction evidence="2">
        <text>D-glyceraldehyde 3-phosphate + phosphate + NAD(+) = (2R)-3-phospho-glyceroyl phosphate + NADH + H(+)</text>
        <dbReference type="Rhea" id="RHEA:10300"/>
        <dbReference type="ChEBI" id="CHEBI:15378"/>
        <dbReference type="ChEBI" id="CHEBI:43474"/>
        <dbReference type="ChEBI" id="CHEBI:57540"/>
        <dbReference type="ChEBI" id="CHEBI:57604"/>
        <dbReference type="ChEBI" id="CHEBI:57945"/>
        <dbReference type="ChEBI" id="CHEBI:59776"/>
        <dbReference type="EC" id="1.2.1.12"/>
    </reaction>
</comment>
<comment type="pathway">
    <text>Carbohydrate degradation; glycolysis; pyruvate from D-glyceraldehyde 3-phosphate: step 1/5.</text>
</comment>
<comment type="subunit">
    <text>Homotetramer.</text>
</comment>
<comment type="subcellular location">
    <subcellularLocation>
        <location>Cytoplasm</location>
    </subcellularLocation>
</comment>
<comment type="similarity">
    <text evidence="3">Belongs to the glyceraldehyde-3-phosphate dehydrogenase family.</text>
</comment>
<comment type="sequence caution" evidence="3">
    <conflict type="erroneous gene model prediction">
        <sequence resource="EMBL-CDS" id="EAL29271"/>
    </conflict>
</comment>
<feature type="chain" id="PRO_0000145524" description="Glyceraldehyde-3-phosphate dehydrogenase 2">
    <location>
        <begin position="1"/>
        <end position="332"/>
    </location>
</feature>
<feature type="active site" description="Nucleophile" evidence="2">
    <location>
        <position position="149"/>
    </location>
</feature>
<feature type="binding site" evidence="1">
    <location>
        <begin position="11"/>
        <end position="12"/>
    </location>
    <ligand>
        <name>NAD(+)</name>
        <dbReference type="ChEBI" id="CHEBI:57540"/>
    </ligand>
</feature>
<feature type="binding site" evidence="1">
    <location>
        <position position="32"/>
    </location>
    <ligand>
        <name>NAD(+)</name>
        <dbReference type="ChEBI" id="CHEBI:57540"/>
    </ligand>
</feature>
<feature type="binding site" evidence="1">
    <location>
        <position position="77"/>
    </location>
    <ligand>
        <name>NAD(+)</name>
        <dbReference type="ChEBI" id="CHEBI:57540"/>
    </ligand>
</feature>
<feature type="binding site" evidence="1">
    <location>
        <begin position="148"/>
        <end position="150"/>
    </location>
    <ligand>
        <name>D-glyceraldehyde 3-phosphate</name>
        <dbReference type="ChEBI" id="CHEBI:59776"/>
    </ligand>
</feature>
<feature type="binding site" evidence="1">
    <location>
        <position position="179"/>
    </location>
    <ligand>
        <name>D-glyceraldehyde 3-phosphate</name>
        <dbReference type="ChEBI" id="CHEBI:59776"/>
    </ligand>
</feature>
<feature type="binding site" evidence="1">
    <location>
        <begin position="208"/>
        <end position="209"/>
    </location>
    <ligand>
        <name>D-glyceraldehyde 3-phosphate</name>
        <dbReference type="ChEBI" id="CHEBI:59776"/>
    </ligand>
</feature>
<feature type="binding site" evidence="1">
    <location>
        <position position="231"/>
    </location>
    <ligand>
        <name>D-glyceraldehyde 3-phosphate</name>
        <dbReference type="ChEBI" id="CHEBI:59776"/>
    </ligand>
</feature>
<feature type="binding site" evidence="1">
    <location>
        <position position="313"/>
    </location>
    <ligand>
        <name>NAD(+)</name>
        <dbReference type="ChEBI" id="CHEBI:57540"/>
    </ligand>
</feature>
<feature type="site" description="Activates thiol group during catalysis" evidence="1">
    <location>
        <position position="176"/>
    </location>
</feature>
<protein>
    <recommendedName>
        <fullName>Glyceraldehyde-3-phosphate dehydrogenase 2</fullName>
        <ecNumber>1.2.1.12</ecNumber>
    </recommendedName>
    <alternativeName>
        <fullName>Glyceraldehyde-3-phosphate dehydrogenase II</fullName>
        <shortName>GAPDH II</shortName>
    </alternativeName>
</protein>
<name>G3P2_DROPS</name>
<accession>O44104</accession>
<accession>Q29CT3</accession>
<dbReference type="EC" id="1.2.1.12"/>
<dbReference type="EMBL" id="CH475410">
    <property type="protein sequence ID" value="EAL29271.1"/>
    <property type="status" value="ALT_SEQ"/>
    <property type="molecule type" value="Genomic_DNA"/>
</dbReference>
<dbReference type="EMBL" id="AF025809">
    <property type="protein sequence ID" value="AAB87894.1"/>
    <property type="molecule type" value="mRNA"/>
</dbReference>
<dbReference type="RefSeq" id="XP_001352353.1">
    <property type="nucleotide sequence ID" value="XM_001352317.3"/>
</dbReference>
<dbReference type="SMR" id="O44104"/>
<dbReference type="FunCoup" id="O44104">
    <property type="interactions" value="317"/>
</dbReference>
<dbReference type="STRING" id="46245.O44104"/>
<dbReference type="EnsemblMetazoa" id="FBtr0286854">
    <property type="protein sequence ID" value="FBpp0285292"/>
    <property type="gene ID" value="FBgn0012698"/>
</dbReference>
<dbReference type="GeneID" id="4811785"/>
<dbReference type="KEGG" id="dpo:4811785"/>
<dbReference type="CTD" id="32545"/>
<dbReference type="eggNOG" id="KOG0657">
    <property type="taxonomic scope" value="Eukaryota"/>
</dbReference>
<dbReference type="HOGENOM" id="CLU_030140_0_3_1"/>
<dbReference type="InParanoid" id="O44104"/>
<dbReference type="OMA" id="YGYTCNM"/>
<dbReference type="PhylomeDB" id="O44104"/>
<dbReference type="UniPathway" id="UPA00109">
    <property type="reaction ID" value="UER00184"/>
</dbReference>
<dbReference type="ChiTaRS" id="Gapdh2">
    <property type="organism name" value="fly"/>
</dbReference>
<dbReference type="Proteomes" id="UP000001819">
    <property type="component" value="Chromosome X"/>
</dbReference>
<dbReference type="Bgee" id="FBgn0012698">
    <property type="expression patterns" value="Expressed in insect adult head and 2 other cell types or tissues"/>
</dbReference>
<dbReference type="GO" id="GO:0005829">
    <property type="term" value="C:cytosol"/>
    <property type="evidence" value="ECO:0007669"/>
    <property type="project" value="TreeGrafter"/>
</dbReference>
<dbReference type="GO" id="GO:0004365">
    <property type="term" value="F:glyceraldehyde-3-phosphate dehydrogenase (NAD+) (phosphorylating) activity"/>
    <property type="evidence" value="ECO:0007669"/>
    <property type="project" value="UniProtKB-EC"/>
</dbReference>
<dbReference type="GO" id="GO:0051287">
    <property type="term" value="F:NAD binding"/>
    <property type="evidence" value="ECO:0007669"/>
    <property type="project" value="InterPro"/>
</dbReference>
<dbReference type="GO" id="GO:0050661">
    <property type="term" value="F:NADP binding"/>
    <property type="evidence" value="ECO:0007669"/>
    <property type="project" value="InterPro"/>
</dbReference>
<dbReference type="GO" id="GO:0006006">
    <property type="term" value="P:glucose metabolic process"/>
    <property type="evidence" value="ECO:0007669"/>
    <property type="project" value="InterPro"/>
</dbReference>
<dbReference type="GO" id="GO:0006096">
    <property type="term" value="P:glycolytic process"/>
    <property type="evidence" value="ECO:0007669"/>
    <property type="project" value="UniProtKB-UniPathway"/>
</dbReference>
<dbReference type="CDD" id="cd18126">
    <property type="entry name" value="GAPDH_I_C"/>
    <property type="match status" value="1"/>
</dbReference>
<dbReference type="CDD" id="cd05214">
    <property type="entry name" value="GAPDH_I_N"/>
    <property type="match status" value="1"/>
</dbReference>
<dbReference type="FunFam" id="3.30.360.10:FF:000001">
    <property type="entry name" value="Glyceraldehyde-3-phosphate dehydrogenase"/>
    <property type="match status" value="1"/>
</dbReference>
<dbReference type="FunFam" id="3.40.50.720:FF:000266">
    <property type="entry name" value="Glyceraldehyde-3-phosphate dehydrogenase"/>
    <property type="match status" value="1"/>
</dbReference>
<dbReference type="Gene3D" id="3.30.360.10">
    <property type="entry name" value="Dihydrodipicolinate Reductase, domain 2"/>
    <property type="match status" value="1"/>
</dbReference>
<dbReference type="Gene3D" id="3.40.50.720">
    <property type="entry name" value="NAD(P)-binding Rossmann-like Domain"/>
    <property type="match status" value="1"/>
</dbReference>
<dbReference type="InterPro" id="IPR020831">
    <property type="entry name" value="GlycerAld/Erythrose_P_DH"/>
</dbReference>
<dbReference type="InterPro" id="IPR020830">
    <property type="entry name" value="GlycerAld_3-P_DH_AS"/>
</dbReference>
<dbReference type="InterPro" id="IPR020829">
    <property type="entry name" value="GlycerAld_3-P_DH_cat"/>
</dbReference>
<dbReference type="InterPro" id="IPR020828">
    <property type="entry name" value="GlycerAld_3-P_DH_NAD(P)-bd"/>
</dbReference>
<dbReference type="InterPro" id="IPR006424">
    <property type="entry name" value="Glyceraldehyde-3-P_DH_1"/>
</dbReference>
<dbReference type="InterPro" id="IPR036291">
    <property type="entry name" value="NAD(P)-bd_dom_sf"/>
</dbReference>
<dbReference type="NCBIfam" id="TIGR01534">
    <property type="entry name" value="GAPDH-I"/>
    <property type="match status" value="1"/>
</dbReference>
<dbReference type="PANTHER" id="PTHR10836">
    <property type="entry name" value="GLYCERALDEHYDE 3-PHOSPHATE DEHYDROGENASE"/>
    <property type="match status" value="1"/>
</dbReference>
<dbReference type="PANTHER" id="PTHR10836:SF76">
    <property type="entry name" value="GLYCERALDEHYDE-3-PHOSPHATE DEHYDROGENASE-RELATED"/>
    <property type="match status" value="1"/>
</dbReference>
<dbReference type="Pfam" id="PF02800">
    <property type="entry name" value="Gp_dh_C"/>
    <property type="match status" value="1"/>
</dbReference>
<dbReference type="Pfam" id="PF00044">
    <property type="entry name" value="Gp_dh_N"/>
    <property type="match status" value="1"/>
</dbReference>
<dbReference type="PIRSF" id="PIRSF000149">
    <property type="entry name" value="GAP_DH"/>
    <property type="match status" value="1"/>
</dbReference>
<dbReference type="PRINTS" id="PR00078">
    <property type="entry name" value="G3PDHDRGNASE"/>
</dbReference>
<dbReference type="SMART" id="SM00846">
    <property type="entry name" value="Gp_dh_N"/>
    <property type="match status" value="1"/>
</dbReference>
<dbReference type="SUPFAM" id="SSF55347">
    <property type="entry name" value="Glyceraldehyde-3-phosphate dehydrogenase-like, C-terminal domain"/>
    <property type="match status" value="1"/>
</dbReference>
<dbReference type="SUPFAM" id="SSF51735">
    <property type="entry name" value="NAD(P)-binding Rossmann-fold domains"/>
    <property type="match status" value="1"/>
</dbReference>
<dbReference type="PROSITE" id="PS00071">
    <property type="entry name" value="GAPDH"/>
    <property type="match status" value="1"/>
</dbReference>
<organism>
    <name type="scientific">Drosophila pseudoobscura pseudoobscura</name>
    <name type="common">Fruit fly</name>
    <dbReference type="NCBI Taxonomy" id="46245"/>
    <lineage>
        <taxon>Eukaryota</taxon>
        <taxon>Metazoa</taxon>
        <taxon>Ecdysozoa</taxon>
        <taxon>Arthropoda</taxon>
        <taxon>Hexapoda</taxon>
        <taxon>Insecta</taxon>
        <taxon>Pterygota</taxon>
        <taxon>Neoptera</taxon>
        <taxon>Endopterygota</taxon>
        <taxon>Diptera</taxon>
        <taxon>Brachycera</taxon>
        <taxon>Muscomorpha</taxon>
        <taxon>Ephydroidea</taxon>
        <taxon>Drosophilidae</taxon>
        <taxon>Drosophila</taxon>
        <taxon>Sophophora</taxon>
    </lineage>
</organism>